<accession>B1MW54</accession>
<gene>
    <name evidence="1" type="primary">tyrS</name>
    <name type="ordered locus">LCK_00026</name>
</gene>
<name>SYY_LEUCK</name>
<feature type="chain" id="PRO_1000189305" description="Tyrosine--tRNA ligase">
    <location>
        <begin position="1"/>
        <end position="415"/>
    </location>
</feature>
<feature type="domain" description="S4 RNA-binding" evidence="1">
    <location>
        <begin position="348"/>
        <end position="415"/>
    </location>
</feature>
<feature type="short sequence motif" description="'HIGH' region">
    <location>
        <begin position="39"/>
        <end position="48"/>
    </location>
</feature>
<feature type="short sequence motif" description="'KMSKS' region">
    <location>
        <begin position="226"/>
        <end position="230"/>
    </location>
</feature>
<feature type="binding site" evidence="1">
    <location>
        <position position="34"/>
    </location>
    <ligand>
        <name>L-tyrosine</name>
        <dbReference type="ChEBI" id="CHEBI:58315"/>
    </ligand>
</feature>
<feature type="binding site" evidence="1">
    <location>
        <position position="164"/>
    </location>
    <ligand>
        <name>L-tyrosine</name>
        <dbReference type="ChEBI" id="CHEBI:58315"/>
    </ligand>
</feature>
<feature type="binding site" evidence="1">
    <location>
        <position position="168"/>
    </location>
    <ligand>
        <name>L-tyrosine</name>
        <dbReference type="ChEBI" id="CHEBI:58315"/>
    </ligand>
</feature>
<feature type="binding site" evidence="1">
    <location>
        <position position="229"/>
    </location>
    <ligand>
        <name>ATP</name>
        <dbReference type="ChEBI" id="CHEBI:30616"/>
    </ligand>
</feature>
<comment type="function">
    <text evidence="1">Catalyzes the attachment of tyrosine to tRNA(Tyr) in a two-step reaction: tyrosine is first activated by ATP to form Tyr-AMP and then transferred to the acceptor end of tRNA(Tyr).</text>
</comment>
<comment type="catalytic activity">
    <reaction evidence="1">
        <text>tRNA(Tyr) + L-tyrosine + ATP = L-tyrosyl-tRNA(Tyr) + AMP + diphosphate + H(+)</text>
        <dbReference type="Rhea" id="RHEA:10220"/>
        <dbReference type="Rhea" id="RHEA-COMP:9706"/>
        <dbReference type="Rhea" id="RHEA-COMP:9707"/>
        <dbReference type="ChEBI" id="CHEBI:15378"/>
        <dbReference type="ChEBI" id="CHEBI:30616"/>
        <dbReference type="ChEBI" id="CHEBI:33019"/>
        <dbReference type="ChEBI" id="CHEBI:58315"/>
        <dbReference type="ChEBI" id="CHEBI:78442"/>
        <dbReference type="ChEBI" id="CHEBI:78536"/>
        <dbReference type="ChEBI" id="CHEBI:456215"/>
        <dbReference type="EC" id="6.1.1.1"/>
    </reaction>
</comment>
<comment type="subunit">
    <text evidence="1">Homodimer.</text>
</comment>
<comment type="subcellular location">
    <subcellularLocation>
        <location evidence="1">Cytoplasm</location>
    </subcellularLocation>
</comment>
<comment type="similarity">
    <text evidence="1">Belongs to the class-I aminoacyl-tRNA synthetase family. TyrS type 1 subfamily.</text>
</comment>
<evidence type="ECO:0000255" key="1">
    <source>
        <dbReference type="HAMAP-Rule" id="MF_02006"/>
    </source>
</evidence>
<protein>
    <recommendedName>
        <fullName evidence="1">Tyrosine--tRNA ligase</fullName>
        <ecNumber evidence="1">6.1.1.1</ecNumber>
    </recommendedName>
    <alternativeName>
        <fullName evidence="1">Tyrosyl-tRNA synthetase</fullName>
        <shortName evidence="1">TyrRS</shortName>
    </alternativeName>
</protein>
<keyword id="KW-0030">Aminoacyl-tRNA synthetase</keyword>
<keyword id="KW-0067">ATP-binding</keyword>
<keyword id="KW-0963">Cytoplasm</keyword>
<keyword id="KW-0436">Ligase</keyword>
<keyword id="KW-0547">Nucleotide-binding</keyword>
<keyword id="KW-0648">Protein biosynthesis</keyword>
<keyword id="KW-1185">Reference proteome</keyword>
<keyword id="KW-0694">RNA-binding</keyword>
<organism>
    <name type="scientific">Leuconostoc citreum (strain KM20)</name>
    <dbReference type="NCBI Taxonomy" id="349519"/>
    <lineage>
        <taxon>Bacteria</taxon>
        <taxon>Bacillati</taxon>
        <taxon>Bacillota</taxon>
        <taxon>Bacilli</taxon>
        <taxon>Lactobacillales</taxon>
        <taxon>Lactobacillaceae</taxon>
        <taxon>Leuconostoc</taxon>
    </lineage>
</organism>
<reference key="1">
    <citation type="journal article" date="2008" name="J. Bacteriol.">
        <title>Complete genome sequence of Leuconostoc citreum KM20.</title>
        <authorList>
            <person name="Kim J.F."/>
            <person name="Jeong H."/>
            <person name="Lee J.-S."/>
            <person name="Choi S.-H."/>
            <person name="Ha M."/>
            <person name="Hur C.-G."/>
            <person name="Kim J.-S."/>
            <person name="Lee S."/>
            <person name="Park H.-S."/>
            <person name="Park Y.-H."/>
            <person name="Oh T.K."/>
        </authorList>
    </citation>
    <scope>NUCLEOTIDE SEQUENCE [LARGE SCALE GENOMIC DNA]</scope>
    <source>
        <strain>KM20</strain>
    </source>
</reference>
<dbReference type="EC" id="6.1.1.1" evidence="1"/>
<dbReference type="EMBL" id="DQ489736">
    <property type="protein sequence ID" value="ACA81859.1"/>
    <property type="molecule type" value="Genomic_DNA"/>
</dbReference>
<dbReference type="RefSeq" id="WP_004908348.1">
    <property type="nucleotide sequence ID" value="NC_010471.1"/>
</dbReference>
<dbReference type="SMR" id="B1MW54"/>
<dbReference type="STRING" id="349519.LCK_00026"/>
<dbReference type="KEGG" id="lci:LCK_00026"/>
<dbReference type="eggNOG" id="COG0162">
    <property type="taxonomic scope" value="Bacteria"/>
</dbReference>
<dbReference type="HOGENOM" id="CLU_024003_0_3_9"/>
<dbReference type="OrthoDB" id="9804243at2"/>
<dbReference type="Proteomes" id="UP000002166">
    <property type="component" value="Chromosome"/>
</dbReference>
<dbReference type="GO" id="GO:0005829">
    <property type="term" value="C:cytosol"/>
    <property type="evidence" value="ECO:0007669"/>
    <property type="project" value="TreeGrafter"/>
</dbReference>
<dbReference type="GO" id="GO:0005524">
    <property type="term" value="F:ATP binding"/>
    <property type="evidence" value="ECO:0007669"/>
    <property type="project" value="UniProtKB-UniRule"/>
</dbReference>
<dbReference type="GO" id="GO:0003723">
    <property type="term" value="F:RNA binding"/>
    <property type="evidence" value="ECO:0007669"/>
    <property type="project" value="UniProtKB-KW"/>
</dbReference>
<dbReference type="GO" id="GO:0004831">
    <property type="term" value="F:tyrosine-tRNA ligase activity"/>
    <property type="evidence" value="ECO:0007669"/>
    <property type="project" value="UniProtKB-UniRule"/>
</dbReference>
<dbReference type="GO" id="GO:0006437">
    <property type="term" value="P:tyrosyl-tRNA aminoacylation"/>
    <property type="evidence" value="ECO:0007669"/>
    <property type="project" value="UniProtKB-UniRule"/>
</dbReference>
<dbReference type="CDD" id="cd00165">
    <property type="entry name" value="S4"/>
    <property type="match status" value="1"/>
</dbReference>
<dbReference type="CDD" id="cd00805">
    <property type="entry name" value="TyrRS_core"/>
    <property type="match status" value="1"/>
</dbReference>
<dbReference type="FunFam" id="1.10.240.10:FF:000001">
    <property type="entry name" value="Tyrosine--tRNA ligase"/>
    <property type="match status" value="1"/>
</dbReference>
<dbReference type="Gene3D" id="3.40.50.620">
    <property type="entry name" value="HUPs"/>
    <property type="match status" value="1"/>
</dbReference>
<dbReference type="Gene3D" id="3.10.290.10">
    <property type="entry name" value="RNA-binding S4 domain"/>
    <property type="match status" value="1"/>
</dbReference>
<dbReference type="Gene3D" id="1.10.240.10">
    <property type="entry name" value="Tyrosyl-Transfer RNA Synthetase"/>
    <property type="match status" value="1"/>
</dbReference>
<dbReference type="HAMAP" id="MF_02006">
    <property type="entry name" value="Tyr_tRNA_synth_type1"/>
    <property type="match status" value="1"/>
</dbReference>
<dbReference type="InterPro" id="IPR001412">
    <property type="entry name" value="aa-tRNA-synth_I_CS"/>
</dbReference>
<dbReference type="InterPro" id="IPR002305">
    <property type="entry name" value="aa-tRNA-synth_Ic"/>
</dbReference>
<dbReference type="InterPro" id="IPR014729">
    <property type="entry name" value="Rossmann-like_a/b/a_fold"/>
</dbReference>
<dbReference type="InterPro" id="IPR036986">
    <property type="entry name" value="S4_RNA-bd_sf"/>
</dbReference>
<dbReference type="InterPro" id="IPR054608">
    <property type="entry name" value="SYY-like_C"/>
</dbReference>
<dbReference type="InterPro" id="IPR002307">
    <property type="entry name" value="Tyr-tRNA-ligase"/>
</dbReference>
<dbReference type="InterPro" id="IPR024088">
    <property type="entry name" value="Tyr-tRNA-ligase_bac-type"/>
</dbReference>
<dbReference type="InterPro" id="IPR024107">
    <property type="entry name" value="Tyr-tRNA-ligase_bac_1"/>
</dbReference>
<dbReference type="NCBIfam" id="TIGR00234">
    <property type="entry name" value="tyrS"/>
    <property type="match status" value="1"/>
</dbReference>
<dbReference type="PANTHER" id="PTHR11766:SF0">
    <property type="entry name" value="TYROSINE--TRNA LIGASE, MITOCHONDRIAL"/>
    <property type="match status" value="1"/>
</dbReference>
<dbReference type="PANTHER" id="PTHR11766">
    <property type="entry name" value="TYROSYL-TRNA SYNTHETASE"/>
    <property type="match status" value="1"/>
</dbReference>
<dbReference type="Pfam" id="PF22421">
    <property type="entry name" value="SYY_C-terminal"/>
    <property type="match status" value="1"/>
</dbReference>
<dbReference type="Pfam" id="PF00579">
    <property type="entry name" value="tRNA-synt_1b"/>
    <property type="match status" value="1"/>
</dbReference>
<dbReference type="PRINTS" id="PR01040">
    <property type="entry name" value="TRNASYNTHTYR"/>
</dbReference>
<dbReference type="SUPFAM" id="SSF55174">
    <property type="entry name" value="Alpha-L RNA-binding motif"/>
    <property type="match status" value="1"/>
</dbReference>
<dbReference type="SUPFAM" id="SSF52374">
    <property type="entry name" value="Nucleotidylyl transferase"/>
    <property type="match status" value="1"/>
</dbReference>
<dbReference type="PROSITE" id="PS00178">
    <property type="entry name" value="AA_TRNA_LIGASE_I"/>
    <property type="match status" value="1"/>
</dbReference>
<dbReference type="PROSITE" id="PS50889">
    <property type="entry name" value="S4"/>
    <property type="match status" value="1"/>
</dbReference>
<sequence>MNFIEDLKWRGALNQITDEAGLLEAMASGKVGAYVGTDPTADSLHLGHLIPFMVLKRFQKAGGKAVIIIGGATGAIGDPRPTTERQLLSSEQLAENEKGITAQVTKLFGDNDTRIVNNNDWLGQLTLTDFLRDYGKLFSINVMLKKDVVASRLETGISFTEFTYQVLQGIDFHELWRREDVKLQIGGSDQWGNITSGIDLIHSLEGNEAKAFGLTIPLMTDSTGKKFGKSEGNAIWLDPKKTSPYTFYQFWLNQGDADVVKYLKYFTFLGSEEIDDLAEAVATNPGERLAQRRLAQEVTKFVHGESAVKEAEDLSTALFSGNVATLSAAQIADAFGGVPSFEAANTVKNIVDFLVDGGVEASKRQAREDVANGAISINGEKVTDVAAEINPLSHYDGQFVLVRRGKKKYFLGKIK</sequence>
<proteinExistence type="inferred from homology"/>